<dbReference type="EC" id="2.7.7.38" evidence="1"/>
<dbReference type="EMBL" id="CP001359">
    <property type="protein sequence ID" value="ACL67645.1"/>
    <property type="molecule type" value="Genomic_DNA"/>
</dbReference>
<dbReference type="RefSeq" id="WP_015935342.1">
    <property type="nucleotide sequence ID" value="NC_011891.1"/>
</dbReference>
<dbReference type="SMR" id="B8JBN7"/>
<dbReference type="KEGG" id="acp:A2cp1_4328"/>
<dbReference type="HOGENOM" id="CLU_065038_0_1_7"/>
<dbReference type="UniPathway" id="UPA00030"/>
<dbReference type="UniPathway" id="UPA00358">
    <property type="reaction ID" value="UER00476"/>
</dbReference>
<dbReference type="Proteomes" id="UP000007089">
    <property type="component" value="Chromosome"/>
</dbReference>
<dbReference type="GO" id="GO:0005829">
    <property type="term" value="C:cytosol"/>
    <property type="evidence" value="ECO:0007669"/>
    <property type="project" value="TreeGrafter"/>
</dbReference>
<dbReference type="GO" id="GO:0008690">
    <property type="term" value="F:3-deoxy-manno-octulosonate cytidylyltransferase activity"/>
    <property type="evidence" value="ECO:0007669"/>
    <property type="project" value="UniProtKB-UniRule"/>
</dbReference>
<dbReference type="GO" id="GO:0033468">
    <property type="term" value="P:CMP-keto-3-deoxy-D-manno-octulosonic acid biosynthetic process"/>
    <property type="evidence" value="ECO:0007669"/>
    <property type="project" value="UniProtKB-UniRule"/>
</dbReference>
<dbReference type="GO" id="GO:0009103">
    <property type="term" value="P:lipopolysaccharide biosynthetic process"/>
    <property type="evidence" value="ECO:0007669"/>
    <property type="project" value="UniProtKB-UniRule"/>
</dbReference>
<dbReference type="CDD" id="cd02517">
    <property type="entry name" value="CMP-KDO-Synthetase"/>
    <property type="match status" value="1"/>
</dbReference>
<dbReference type="FunFam" id="3.90.550.10:FF:000011">
    <property type="entry name" value="3-deoxy-manno-octulosonate cytidylyltransferase"/>
    <property type="match status" value="1"/>
</dbReference>
<dbReference type="Gene3D" id="3.90.550.10">
    <property type="entry name" value="Spore Coat Polysaccharide Biosynthesis Protein SpsA, Chain A"/>
    <property type="match status" value="1"/>
</dbReference>
<dbReference type="HAMAP" id="MF_00057">
    <property type="entry name" value="KdsB"/>
    <property type="match status" value="1"/>
</dbReference>
<dbReference type="InterPro" id="IPR003329">
    <property type="entry name" value="Cytidylyl_trans"/>
</dbReference>
<dbReference type="InterPro" id="IPR004528">
    <property type="entry name" value="KdsB"/>
</dbReference>
<dbReference type="InterPro" id="IPR029044">
    <property type="entry name" value="Nucleotide-diphossugar_trans"/>
</dbReference>
<dbReference type="NCBIfam" id="TIGR00466">
    <property type="entry name" value="kdsB"/>
    <property type="match status" value="1"/>
</dbReference>
<dbReference type="NCBIfam" id="NF003950">
    <property type="entry name" value="PRK05450.1-3"/>
    <property type="match status" value="1"/>
</dbReference>
<dbReference type="NCBIfam" id="NF003952">
    <property type="entry name" value="PRK05450.1-5"/>
    <property type="match status" value="1"/>
</dbReference>
<dbReference type="NCBIfam" id="NF009905">
    <property type="entry name" value="PRK13368.1"/>
    <property type="match status" value="1"/>
</dbReference>
<dbReference type="PANTHER" id="PTHR42866">
    <property type="entry name" value="3-DEOXY-MANNO-OCTULOSONATE CYTIDYLYLTRANSFERASE"/>
    <property type="match status" value="1"/>
</dbReference>
<dbReference type="PANTHER" id="PTHR42866:SF2">
    <property type="entry name" value="3-DEOXY-MANNO-OCTULOSONATE CYTIDYLYLTRANSFERASE, MITOCHONDRIAL"/>
    <property type="match status" value="1"/>
</dbReference>
<dbReference type="Pfam" id="PF02348">
    <property type="entry name" value="CTP_transf_3"/>
    <property type="match status" value="1"/>
</dbReference>
<dbReference type="SUPFAM" id="SSF53448">
    <property type="entry name" value="Nucleotide-diphospho-sugar transferases"/>
    <property type="match status" value="1"/>
</dbReference>
<comment type="function">
    <text evidence="1">Activates KDO (a required 8-carbon sugar) for incorporation into bacterial lipopolysaccharide in Gram-negative bacteria.</text>
</comment>
<comment type="catalytic activity">
    <reaction evidence="1">
        <text>3-deoxy-alpha-D-manno-oct-2-ulosonate + CTP = CMP-3-deoxy-beta-D-manno-octulosonate + diphosphate</text>
        <dbReference type="Rhea" id="RHEA:23448"/>
        <dbReference type="ChEBI" id="CHEBI:33019"/>
        <dbReference type="ChEBI" id="CHEBI:37563"/>
        <dbReference type="ChEBI" id="CHEBI:85986"/>
        <dbReference type="ChEBI" id="CHEBI:85987"/>
        <dbReference type="EC" id="2.7.7.38"/>
    </reaction>
</comment>
<comment type="pathway">
    <text evidence="1">Nucleotide-sugar biosynthesis; CMP-3-deoxy-D-manno-octulosonate biosynthesis; CMP-3-deoxy-D-manno-octulosonate from 3-deoxy-D-manno-octulosonate and CTP: step 1/1.</text>
</comment>
<comment type="pathway">
    <text evidence="1">Bacterial outer membrane biogenesis; lipopolysaccharide biosynthesis.</text>
</comment>
<comment type="subcellular location">
    <subcellularLocation>
        <location evidence="1">Cytoplasm</location>
    </subcellularLocation>
</comment>
<comment type="similarity">
    <text evidence="1">Belongs to the KdsB family.</text>
</comment>
<accession>B8JBN7</accession>
<name>KDSB_ANAD2</name>
<sequence>MRHVAVIIPARYGASRFPGKPLADLAGKPLIAHVVERAQRARGVDVVAVATDDDRIARAARDAGGQAILTGPAATGTDRVAEAARKLAPRPEIVVNLQGDEPLIEPEAIEAVIGAMEAGVRMATLARPLAAGELERTQVVKVVTRASGDALYFSRAPIPHRRAGGESPLARAHVGIYAFTAAFLETFTALAPGRLEGEEALEQLRALEHGYDIRVADTGYRGFGIDTPDDLERARALLAAGA</sequence>
<proteinExistence type="inferred from homology"/>
<feature type="chain" id="PRO_1000117796" description="3-deoxy-manno-octulosonate cytidylyltransferase">
    <location>
        <begin position="1"/>
        <end position="242"/>
    </location>
</feature>
<organism>
    <name type="scientific">Anaeromyxobacter dehalogenans (strain 2CP-1 / ATCC BAA-258)</name>
    <dbReference type="NCBI Taxonomy" id="455488"/>
    <lineage>
        <taxon>Bacteria</taxon>
        <taxon>Pseudomonadati</taxon>
        <taxon>Myxococcota</taxon>
        <taxon>Myxococcia</taxon>
        <taxon>Myxococcales</taxon>
        <taxon>Cystobacterineae</taxon>
        <taxon>Anaeromyxobacteraceae</taxon>
        <taxon>Anaeromyxobacter</taxon>
    </lineage>
</organism>
<gene>
    <name evidence="1" type="primary">kdsB</name>
    <name type="ordered locus">A2cp1_4328</name>
</gene>
<keyword id="KW-0963">Cytoplasm</keyword>
<keyword id="KW-0448">Lipopolysaccharide biosynthesis</keyword>
<keyword id="KW-0548">Nucleotidyltransferase</keyword>
<keyword id="KW-0808">Transferase</keyword>
<evidence type="ECO:0000255" key="1">
    <source>
        <dbReference type="HAMAP-Rule" id="MF_00057"/>
    </source>
</evidence>
<reference key="1">
    <citation type="submission" date="2009-01" db="EMBL/GenBank/DDBJ databases">
        <title>Complete sequence of Anaeromyxobacter dehalogenans 2CP-1.</title>
        <authorList>
            <person name="Lucas S."/>
            <person name="Copeland A."/>
            <person name="Lapidus A."/>
            <person name="Glavina del Rio T."/>
            <person name="Dalin E."/>
            <person name="Tice H."/>
            <person name="Bruce D."/>
            <person name="Goodwin L."/>
            <person name="Pitluck S."/>
            <person name="Saunders E."/>
            <person name="Brettin T."/>
            <person name="Detter J.C."/>
            <person name="Han C."/>
            <person name="Larimer F."/>
            <person name="Land M."/>
            <person name="Hauser L."/>
            <person name="Kyrpides N."/>
            <person name="Ovchinnikova G."/>
            <person name="Beliaev A.S."/>
            <person name="Richardson P."/>
        </authorList>
    </citation>
    <scope>NUCLEOTIDE SEQUENCE [LARGE SCALE GENOMIC DNA]</scope>
    <source>
        <strain>2CP-1 / ATCC BAA-258</strain>
    </source>
</reference>
<protein>
    <recommendedName>
        <fullName evidence="1">3-deoxy-manno-octulosonate cytidylyltransferase</fullName>
        <ecNumber evidence="1">2.7.7.38</ecNumber>
    </recommendedName>
    <alternativeName>
        <fullName evidence="1">CMP-2-keto-3-deoxyoctulosonic acid synthase</fullName>
        <shortName evidence="1">CKS</shortName>
        <shortName evidence="1">CMP-KDO synthase</shortName>
    </alternativeName>
</protein>